<reference key="1">
    <citation type="submission" date="2008-06" db="EMBL/GenBank/DDBJ databases">
        <title>Complete sequence of Pelodictyon phaeoclathratiforme BU-1.</title>
        <authorList>
            <consortium name="US DOE Joint Genome Institute"/>
            <person name="Lucas S."/>
            <person name="Copeland A."/>
            <person name="Lapidus A."/>
            <person name="Glavina del Rio T."/>
            <person name="Dalin E."/>
            <person name="Tice H."/>
            <person name="Bruce D."/>
            <person name="Goodwin L."/>
            <person name="Pitluck S."/>
            <person name="Schmutz J."/>
            <person name="Larimer F."/>
            <person name="Land M."/>
            <person name="Hauser L."/>
            <person name="Kyrpides N."/>
            <person name="Mikhailova N."/>
            <person name="Liu Z."/>
            <person name="Li T."/>
            <person name="Zhao F."/>
            <person name="Overmann J."/>
            <person name="Bryant D.A."/>
            <person name="Richardson P."/>
        </authorList>
    </citation>
    <scope>NUCLEOTIDE SEQUENCE [LARGE SCALE GENOMIC DNA]</scope>
    <source>
        <strain>DSM 5477 / BU-1</strain>
    </source>
</reference>
<protein>
    <recommendedName>
        <fullName evidence="1">Large ribosomal subunit protein uL16</fullName>
    </recommendedName>
    <alternativeName>
        <fullName evidence="3">50S ribosomal protein L16</fullName>
    </alternativeName>
</protein>
<organism>
    <name type="scientific">Pelodictyon phaeoclathratiforme (strain DSM 5477 / BU-1)</name>
    <dbReference type="NCBI Taxonomy" id="324925"/>
    <lineage>
        <taxon>Bacteria</taxon>
        <taxon>Pseudomonadati</taxon>
        <taxon>Chlorobiota</taxon>
        <taxon>Chlorobiia</taxon>
        <taxon>Chlorobiales</taxon>
        <taxon>Chlorobiaceae</taxon>
        <taxon>Chlorobium/Pelodictyon group</taxon>
        <taxon>Pelodictyon</taxon>
    </lineage>
</organism>
<keyword id="KW-1185">Reference proteome</keyword>
<keyword id="KW-0687">Ribonucleoprotein</keyword>
<keyword id="KW-0689">Ribosomal protein</keyword>
<keyword id="KW-0694">RNA-binding</keyword>
<keyword id="KW-0699">rRNA-binding</keyword>
<keyword id="KW-0820">tRNA-binding</keyword>
<accession>B4SBV4</accession>
<dbReference type="EMBL" id="CP001110">
    <property type="protein sequence ID" value="ACF42629.1"/>
    <property type="molecule type" value="Genomic_DNA"/>
</dbReference>
<dbReference type="RefSeq" id="WP_012507125.1">
    <property type="nucleotide sequence ID" value="NC_011060.1"/>
</dbReference>
<dbReference type="SMR" id="B4SBV4"/>
<dbReference type="STRING" id="324925.Ppha_0296"/>
<dbReference type="KEGG" id="pph:Ppha_0296"/>
<dbReference type="eggNOG" id="COG0197">
    <property type="taxonomic scope" value="Bacteria"/>
</dbReference>
<dbReference type="HOGENOM" id="CLU_078858_2_1_10"/>
<dbReference type="OrthoDB" id="9802589at2"/>
<dbReference type="Proteomes" id="UP000002724">
    <property type="component" value="Chromosome"/>
</dbReference>
<dbReference type="GO" id="GO:0022625">
    <property type="term" value="C:cytosolic large ribosomal subunit"/>
    <property type="evidence" value="ECO:0007669"/>
    <property type="project" value="TreeGrafter"/>
</dbReference>
<dbReference type="GO" id="GO:0019843">
    <property type="term" value="F:rRNA binding"/>
    <property type="evidence" value="ECO:0007669"/>
    <property type="project" value="UniProtKB-UniRule"/>
</dbReference>
<dbReference type="GO" id="GO:0003735">
    <property type="term" value="F:structural constituent of ribosome"/>
    <property type="evidence" value="ECO:0007669"/>
    <property type="project" value="InterPro"/>
</dbReference>
<dbReference type="GO" id="GO:0000049">
    <property type="term" value="F:tRNA binding"/>
    <property type="evidence" value="ECO:0007669"/>
    <property type="project" value="UniProtKB-KW"/>
</dbReference>
<dbReference type="GO" id="GO:0006412">
    <property type="term" value="P:translation"/>
    <property type="evidence" value="ECO:0007669"/>
    <property type="project" value="UniProtKB-UniRule"/>
</dbReference>
<dbReference type="CDD" id="cd01433">
    <property type="entry name" value="Ribosomal_L16_L10e"/>
    <property type="match status" value="1"/>
</dbReference>
<dbReference type="FunFam" id="3.90.1170.10:FF:000001">
    <property type="entry name" value="50S ribosomal protein L16"/>
    <property type="match status" value="1"/>
</dbReference>
<dbReference type="Gene3D" id="3.90.1170.10">
    <property type="entry name" value="Ribosomal protein L10e/L16"/>
    <property type="match status" value="1"/>
</dbReference>
<dbReference type="HAMAP" id="MF_01342">
    <property type="entry name" value="Ribosomal_uL16"/>
    <property type="match status" value="1"/>
</dbReference>
<dbReference type="InterPro" id="IPR047873">
    <property type="entry name" value="Ribosomal_uL16"/>
</dbReference>
<dbReference type="InterPro" id="IPR000114">
    <property type="entry name" value="Ribosomal_uL16_bact-type"/>
</dbReference>
<dbReference type="InterPro" id="IPR020798">
    <property type="entry name" value="Ribosomal_uL16_CS"/>
</dbReference>
<dbReference type="InterPro" id="IPR016180">
    <property type="entry name" value="Ribosomal_uL16_dom"/>
</dbReference>
<dbReference type="InterPro" id="IPR036920">
    <property type="entry name" value="Ribosomal_uL16_sf"/>
</dbReference>
<dbReference type="NCBIfam" id="TIGR01164">
    <property type="entry name" value="rplP_bact"/>
    <property type="match status" value="1"/>
</dbReference>
<dbReference type="PANTHER" id="PTHR12220">
    <property type="entry name" value="50S/60S RIBOSOMAL PROTEIN L16"/>
    <property type="match status" value="1"/>
</dbReference>
<dbReference type="PANTHER" id="PTHR12220:SF13">
    <property type="entry name" value="LARGE RIBOSOMAL SUBUNIT PROTEIN UL16M"/>
    <property type="match status" value="1"/>
</dbReference>
<dbReference type="Pfam" id="PF00252">
    <property type="entry name" value="Ribosomal_L16"/>
    <property type="match status" value="1"/>
</dbReference>
<dbReference type="PRINTS" id="PR00060">
    <property type="entry name" value="RIBOSOMALL16"/>
</dbReference>
<dbReference type="SUPFAM" id="SSF54686">
    <property type="entry name" value="Ribosomal protein L16p/L10e"/>
    <property type="match status" value="1"/>
</dbReference>
<dbReference type="PROSITE" id="PS00586">
    <property type="entry name" value="RIBOSOMAL_L16_1"/>
    <property type="match status" value="1"/>
</dbReference>
<dbReference type="PROSITE" id="PS00701">
    <property type="entry name" value="RIBOSOMAL_L16_2"/>
    <property type="match status" value="1"/>
</dbReference>
<comment type="function">
    <text evidence="1">Binds 23S rRNA and is also seen to make contacts with the A and possibly P site tRNAs.</text>
</comment>
<comment type="subunit">
    <text evidence="1">Part of the 50S ribosomal subunit.</text>
</comment>
<comment type="similarity">
    <text evidence="1">Belongs to the universal ribosomal protein uL16 family.</text>
</comment>
<sequence length="139" mass="15789">MLMPKRVKYRKTQRGRMKGNSGRGTDVSFGSFGLKAIEPAWITSRQIEAARVAMTRFMKRDGKIWIRIFPDKPVTKKPAETRMGSGKGSPEFWVAVVKPGRIMFEADGVPKEVATEAFRLAAKKLPIKTRFIVRPDYED</sequence>
<proteinExistence type="inferred from homology"/>
<name>RL16_PELPB</name>
<feature type="chain" id="PRO_1000143005" description="Large ribosomal subunit protein uL16">
    <location>
        <begin position="1"/>
        <end position="139"/>
    </location>
</feature>
<feature type="region of interest" description="Disordered" evidence="2">
    <location>
        <begin position="1"/>
        <end position="24"/>
    </location>
</feature>
<feature type="compositionally biased region" description="Basic residues" evidence="2">
    <location>
        <begin position="1"/>
        <end position="17"/>
    </location>
</feature>
<evidence type="ECO:0000255" key="1">
    <source>
        <dbReference type="HAMAP-Rule" id="MF_01342"/>
    </source>
</evidence>
<evidence type="ECO:0000256" key="2">
    <source>
        <dbReference type="SAM" id="MobiDB-lite"/>
    </source>
</evidence>
<evidence type="ECO:0000305" key="3"/>
<gene>
    <name evidence="1" type="primary">rplP</name>
    <name type="ordered locus">Ppha_0296</name>
</gene>